<keyword id="KW-0067">ATP-binding</keyword>
<keyword id="KW-1003">Cell membrane</keyword>
<keyword id="KW-0963">Cytoplasm</keyword>
<keyword id="KW-0472">Membrane</keyword>
<keyword id="KW-0479">Metal-binding</keyword>
<keyword id="KW-0547">Nucleotide-binding</keyword>
<keyword id="KW-0653">Protein transport</keyword>
<keyword id="KW-1185">Reference proteome</keyword>
<keyword id="KW-1278">Translocase</keyword>
<keyword id="KW-0811">Translocation</keyword>
<keyword id="KW-0813">Transport</keyword>
<keyword id="KW-0862">Zinc</keyword>
<reference key="1">
    <citation type="journal article" date="2001" name="J. Bacteriol.">
        <title>Genome of the bacterium Streptococcus pneumoniae strain R6.</title>
        <authorList>
            <person name="Hoskins J."/>
            <person name="Alborn W.E. Jr."/>
            <person name="Arnold J."/>
            <person name="Blaszczak L.C."/>
            <person name="Burgett S."/>
            <person name="DeHoff B.S."/>
            <person name="Estrem S.T."/>
            <person name="Fritz L."/>
            <person name="Fu D.-J."/>
            <person name="Fuller W."/>
            <person name="Geringer C."/>
            <person name="Gilmour R."/>
            <person name="Glass J.S."/>
            <person name="Khoja H."/>
            <person name="Kraft A.R."/>
            <person name="Lagace R.E."/>
            <person name="LeBlanc D.J."/>
            <person name="Lee L.N."/>
            <person name="Lefkowitz E.J."/>
            <person name="Lu J."/>
            <person name="Matsushima P."/>
            <person name="McAhren S.M."/>
            <person name="McHenney M."/>
            <person name="McLeaster K."/>
            <person name="Mundy C.W."/>
            <person name="Nicas T.I."/>
            <person name="Norris F.H."/>
            <person name="O'Gara M."/>
            <person name="Peery R.B."/>
            <person name="Robertson G.T."/>
            <person name="Rockey P."/>
            <person name="Sun P.-M."/>
            <person name="Winkler M.E."/>
            <person name="Yang Y."/>
            <person name="Young-Bellido M."/>
            <person name="Zhao G."/>
            <person name="Zook C.A."/>
            <person name="Baltz R.H."/>
            <person name="Jaskunas S.R."/>
            <person name="Rosteck P.R. Jr."/>
            <person name="Skatrud P.L."/>
            <person name="Glass J.I."/>
        </authorList>
    </citation>
    <scope>NUCLEOTIDE SEQUENCE [LARGE SCALE GENOMIC DNA]</scope>
    <source>
        <strain>ATCC BAA-255 / R6</strain>
    </source>
</reference>
<dbReference type="EC" id="7.4.2.8" evidence="1"/>
<dbReference type="EMBL" id="AE007317">
    <property type="protein sequence ID" value="AAL00348.1"/>
    <property type="molecule type" value="Genomic_DNA"/>
</dbReference>
<dbReference type="PIR" id="G98064">
    <property type="entry name" value="G98064"/>
</dbReference>
<dbReference type="RefSeq" id="NP_359137.1">
    <property type="nucleotide sequence ID" value="NC_003098.1"/>
</dbReference>
<dbReference type="RefSeq" id="WP_001274082.1">
    <property type="nucleotide sequence ID" value="NC_003098.1"/>
</dbReference>
<dbReference type="SMR" id="Q8DNT8"/>
<dbReference type="STRING" id="171101.spr1544"/>
<dbReference type="KEGG" id="spr:spr1544"/>
<dbReference type="PATRIC" id="fig|171101.6.peg.1667"/>
<dbReference type="eggNOG" id="COG0653">
    <property type="taxonomic scope" value="Bacteria"/>
</dbReference>
<dbReference type="HOGENOM" id="CLU_005314_3_0_9"/>
<dbReference type="Proteomes" id="UP000000586">
    <property type="component" value="Chromosome"/>
</dbReference>
<dbReference type="GO" id="GO:0031522">
    <property type="term" value="C:cell envelope Sec protein transport complex"/>
    <property type="evidence" value="ECO:0000318"/>
    <property type="project" value="GO_Central"/>
</dbReference>
<dbReference type="GO" id="GO:0005737">
    <property type="term" value="C:cytoplasm"/>
    <property type="evidence" value="ECO:0007669"/>
    <property type="project" value="UniProtKB-SubCell"/>
</dbReference>
<dbReference type="GO" id="GO:0005886">
    <property type="term" value="C:plasma membrane"/>
    <property type="evidence" value="ECO:0000318"/>
    <property type="project" value="GO_Central"/>
</dbReference>
<dbReference type="GO" id="GO:0005524">
    <property type="term" value="F:ATP binding"/>
    <property type="evidence" value="ECO:0000318"/>
    <property type="project" value="GO_Central"/>
</dbReference>
<dbReference type="GO" id="GO:0046872">
    <property type="term" value="F:metal ion binding"/>
    <property type="evidence" value="ECO:0007669"/>
    <property type="project" value="UniProtKB-KW"/>
</dbReference>
<dbReference type="GO" id="GO:0008564">
    <property type="term" value="F:protein-exporting ATPase activity"/>
    <property type="evidence" value="ECO:0007669"/>
    <property type="project" value="UniProtKB-EC"/>
</dbReference>
<dbReference type="GO" id="GO:0065002">
    <property type="term" value="P:intracellular protein transmembrane transport"/>
    <property type="evidence" value="ECO:0007669"/>
    <property type="project" value="UniProtKB-UniRule"/>
</dbReference>
<dbReference type="GO" id="GO:0017038">
    <property type="term" value="P:protein import"/>
    <property type="evidence" value="ECO:0007669"/>
    <property type="project" value="InterPro"/>
</dbReference>
<dbReference type="GO" id="GO:0006605">
    <property type="term" value="P:protein targeting"/>
    <property type="evidence" value="ECO:0007669"/>
    <property type="project" value="UniProtKB-UniRule"/>
</dbReference>
<dbReference type="GO" id="GO:0043952">
    <property type="term" value="P:protein transport by the Sec complex"/>
    <property type="evidence" value="ECO:0000318"/>
    <property type="project" value="GO_Central"/>
</dbReference>
<dbReference type="CDD" id="cd17928">
    <property type="entry name" value="DEXDc_SecA"/>
    <property type="match status" value="1"/>
</dbReference>
<dbReference type="CDD" id="cd18803">
    <property type="entry name" value="SF2_C_secA"/>
    <property type="match status" value="1"/>
</dbReference>
<dbReference type="FunFam" id="1.10.3060.10:FF:000002">
    <property type="entry name" value="Preprotein translocase subunit SecA"/>
    <property type="match status" value="1"/>
</dbReference>
<dbReference type="FunFam" id="3.40.50.300:FF:000429">
    <property type="entry name" value="Preprotein translocase subunit SecA"/>
    <property type="match status" value="1"/>
</dbReference>
<dbReference type="FunFam" id="3.90.1440.10:FF:000001">
    <property type="entry name" value="Preprotein translocase subunit SecA"/>
    <property type="match status" value="1"/>
</dbReference>
<dbReference type="Gene3D" id="1.10.3060.10">
    <property type="entry name" value="Helical scaffold and wing domains of SecA"/>
    <property type="match status" value="1"/>
</dbReference>
<dbReference type="Gene3D" id="3.40.50.300">
    <property type="entry name" value="P-loop containing nucleotide triphosphate hydrolases"/>
    <property type="match status" value="3"/>
</dbReference>
<dbReference type="Gene3D" id="3.90.1440.10">
    <property type="entry name" value="SecA, preprotein cross-linking domain"/>
    <property type="match status" value="1"/>
</dbReference>
<dbReference type="HAMAP" id="MF_01382">
    <property type="entry name" value="SecA"/>
    <property type="match status" value="1"/>
</dbReference>
<dbReference type="InterPro" id="IPR014001">
    <property type="entry name" value="Helicase_ATP-bd"/>
</dbReference>
<dbReference type="InterPro" id="IPR001650">
    <property type="entry name" value="Helicase_C-like"/>
</dbReference>
<dbReference type="InterPro" id="IPR027417">
    <property type="entry name" value="P-loop_NTPase"/>
</dbReference>
<dbReference type="InterPro" id="IPR004027">
    <property type="entry name" value="SEC_C_motif"/>
</dbReference>
<dbReference type="InterPro" id="IPR000185">
    <property type="entry name" value="SecA"/>
</dbReference>
<dbReference type="InterPro" id="IPR020937">
    <property type="entry name" value="SecA_CS"/>
</dbReference>
<dbReference type="InterPro" id="IPR011115">
    <property type="entry name" value="SecA_DEAD"/>
</dbReference>
<dbReference type="InterPro" id="IPR014018">
    <property type="entry name" value="SecA_motor_DEAD"/>
</dbReference>
<dbReference type="InterPro" id="IPR011130">
    <property type="entry name" value="SecA_preprotein_X-link_dom"/>
</dbReference>
<dbReference type="InterPro" id="IPR044722">
    <property type="entry name" value="SecA_SF2_C"/>
</dbReference>
<dbReference type="InterPro" id="IPR011116">
    <property type="entry name" value="SecA_Wing/Scaffold"/>
</dbReference>
<dbReference type="InterPro" id="IPR036266">
    <property type="entry name" value="SecA_Wing/Scaffold_sf"/>
</dbReference>
<dbReference type="InterPro" id="IPR036670">
    <property type="entry name" value="SecA_X-link_sf"/>
</dbReference>
<dbReference type="NCBIfam" id="NF006630">
    <property type="entry name" value="PRK09200.1"/>
    <property type="match status" value="1"/>
</dbReference>
<dbReference type="NCBIfam" id="TIGR00963">
    <property type="entry name" value="secA"/>
    <property type="match status" value="1"/>
</dbReference>
<dbReference type="PANTHER" id="PTHR30612:SF0">
    <property type="entry name" value="CHLOROPLAST PROTEIN-TRANSPORTING ATPASE"/>
    <property type="match status" value="1"/>
</dbReference>
<dbReference type="PANTHER" id="PTHR30612">
    <property type="entry name" value="SECA INNER MEMBRANE COMPONENT OF SEC PROTEIN SECRETION SYSTEM"/>
    <property type="match status" value="1"/>
</dbReference>
<dbReference type="Pfam" id="PF21090">
    <property type="entry name" value="P-loop_SecA"/>
    <property type="match status" value="2"/>
</dbReference>
<dbReference type="Pfam" id="PF02810">
    <property type="entry name" value="SEC-C"/>
    <property type="match status" value="1"/>
</dbReference>
<dbReference type="Pfam" id="PF07517">
    <property type="entry name" value="SecA_DEAD"/>
    <property type="match status" value="1"/>
</dbReference>
<dbReference type="Pfam" id="PF01043">
    <property type="entry name" value="SecA_PP_bind"/>
    <property type="match status" value="1"/>
</dbReference>
<dbReference type="Pfam" id="PF07516">
    <property type="entry name" value="SecA_SW"/>
    <property type="match status" value="1"/>
</dbReference>
<dbReference type="PRINTS" id="PR00906">
    <property type="entry name" value="SECA"/>
</dbReference>
<dbReference type="SMART" id="SM00957">
    <property type="entry name" value="SecA_DEAD"/>
    <property type="match status" value="1"/>
</dbReference>
<dbReference type="SMART" id="SM00958">
    <property type="entry name" value="SecA_PP_bind"/>
    <property type="match status" value="1"/>
</dbReference>
<dbReference type="SUPFAM" id="SSF81886">
    <property type="entry name" value="Helical scaffold and wing domains of SecA"/>
    <property type="match status" value="1"/>
</dbReference>
<dbReference type="SUPFAM" id="SSF52540">
    <property type="entry name" value="P-loop containing nucleoside triphosphate hydrolases"/>
    <property type="match status" value="2"/>
</dbReference>
<dbReference type="SUPFAM" id="SSF81767">
    <property type="entry name" value="Pre-protein crosslinking domain of SecA"/>
    <property type="match status" value="1"/>
</dbReference>
<dbReference type="PROSITE" id="PS01312">
    <property type="entry name" value="SECA"/>
    <property type="match status" value="1"/>
</dbReference>
<dbReference type="PROSITE" id="PS51196">
    <property type="entry name" value="SECA_MOTOR_DEAD"/>
    <property type="match status" value="1"/>
</dbReference>
<organism>
    <name type="scientific">Streptococcus pneumoniae (strain ATCC BAA-255 / R6)</name>
    <dbReference type="NCBI Taxonomy" id="171101"/>
    <lineage>
        <taxon>Bacteria</taxon>
        <taxon>Bacillati</taxon>
        <taxon>Bacillota</taxon>
        <taxon>Bacilli</taxon>
        <taxon>Lactobacillales</taxon>
        <taxon>Streptococcaceae</taxon>
        <taxon>Streptococcus</taxon>
    </lineage>
</organism>
<proteinExistence type="inferred from homology"/>
<comment type="function">
    <text evidence="1">Part of the Sec protein translocase complex. Interacts with the SecYEG preprotein conducting channel. Has a central role in coupling the hydrolysis of ATP to the transfer of proteins into and across the cell membrane, serving as an ATP-driven molecular motor driving the stepwise translocation of polypeptide chains across the membrane.</text>
</comment>
<comment type="catalytic activity">
    <reaction evidence="1">
        <text>ATP + H2O + cellular proteinSide 1 = ADP + phosphate + cellular proteinSide 2.</text>
        <dbReference type="EC" id="7.4.2.8"/>
    </reaction>
</comment>
<comment type="cofactor">
    <cofactor evidence="1">
        <name>Zn(2+)</name>
        <dbReference type="ChEBI" id="CHEBI:29105"/>
    </cofactor>
    <text evidence="1">May bind 1 zinc ion per subunit.</text>
</comment>
<comment type="subunit">
    <text evidence="1">Monomer and homodimer. Part of the essential Sec protein translocation apparatus which comprises SecA, SecYEG and auxiliary proteins SecDF. Other proteins may also be involved.</text>
</comment>
<comment type="subcellular location">
    <subcellularLocation>
        <location evidence="1">Cell membrane</location>
        <topology evidence="1">Peripheral membrane protein</topology>
        <orientation evidence="1">Cytoplasmic side</orientation>
    </subcellularLocation>
    <subcellularLocation>
        <location evidence="1">Cytoplasm</location>
    </subcellularLocation>
    <text evidence="1">Distribution is 50-50.</text>
</comment>
<comment type="similarity">
    <text evidence="1">Belongs to the SecA family.</text>
</comment>
<evidence type="ECO:0000255" key="1">
    <source>
        <dbReference type="HAMAP-Rule" id="MF_01382"/>
    </source>
</evidence>
<gene>
    <name evidence="1" type="primary">secA</name>
    <name type="ordered locus">spr1544</name>
</gene>
<protein>
    <recommendedName>
        <fullName evidence="1">Protein translocase subunit SecA</fullName>
        <ecNumber evidence="1">7.4.2.8</ecNumber>
    </recommendedName>
</protein>
<sequence>MANILKTIIENDKGEIRRLEKMADKVFKYEDQMAALTDDQLKAKTVEFKERYQNGESLDSLLYEAFAVVREGAKRVLGLFPYKVQVMGGIVLHHGDVPEMRTGEGKTLTATMPVYLNALSGKGVHVVTVNEYLSERDATEMGELYSWLGLSVGINLATKSPMEKKEAYECDITYSTNSEIGFDYLRDNMVVRAENMVQRPLNYALVDEVDSILIDEARTPLIVSGANAVETSQLYHMADHYVKSLNKDDYIIDVQSKTIGLSDSGIDRAESYFKLENLYDIENVALTHFIDNALRANYIMLLDIDYVVSEEQEILIVDQFTGRTMEGRRYSDGLHQAIEAKEGVPIQDETKTSASITYQNLFRMYKKLSGMTGTGKTEEEEFREIYNIRVIPIPTNRPVQRIDHSDLLYASIESKFKAVVEDVKARYQKGQPVLVGTVAVETSDYISKKLVAAGVPHEVLNAKNHYREAQIIMNAGQRGAVTIATNMAGRGTDIKLGEGVRELGGLCVIGTERHESRRIDNQLRGRSGRQGDPGESQFYLSLEDDLMKRFGSERLKGIFERLNMSEEAIESRMLTRQVEAAQKRVEGNNHDTRKQVLQYDDVMREQREIIYAQRYDVITADRDLAPEIQAMIKRTIERVVDGHARAKQDEKLEAILNFAKYNLLPEDSITMEDLSGLSDKAIKEELFQRALKVYDSQVSKLRDEEAVKEFQKVLILRVVDNKWTDHIDALDQLRNAVGLRGYAQNNPVVEYQAEGFRMFNDMIGSIEFDVTRLMMKAQIHEQERPQAERHISTTATRNIAAHQASMPEDLDLNQIGRNELCPCGSGKKFKNCHGKRQ</sequence>
<name>SECA_STRR6</name>
<accession>Q8DNT8</accession>
<feature type="chain" id="PRO_0000318444" description="Protein translocase subunit SecA">
    <location>
        <begin position="1"/>
        <end position="837"/>
    </location>
</feature>
<feature type="binding site" evidence="1">
    <location>
        <position position="85"/>
    </location>
    <ligand>
        <name>ATP</name>
        <dbReference type="ChEBI" id="CHEBI:30616"/>
    </ligand>
</feature>
<feature type="binding site" evidence="1">
    <location>
        <begin position="103"/>
        <end position="107"/>
    </location>
    <ligand>
        <name>ATP</name>
        <dbReference type="ChEBI" id="CHEBI:30616"/>
    </ligand>
</feature>
<feature type="binding site" evidence="1">
    <location>
        <position position="493"/>
    </location>
    <ligand>
        <name>ATP</name>
        <dbReference type="ChEBI" id="CHEBI:30616"/>
    </ligand>
</feature>
<feature type="binding site" evidence="1">
    <location>
        <position position="821"/>
    </location>
    <ligand>
        <name>Zn(2+)</name>
        <dbReference type="ChEBI" id="CHEBI:29105"/>
    </ligand>
</feature>
<feature type="binding site" evidence="1">
    <location>
        <position position="823"/>
    </location>
    <ligand>
        <name>Zn(2+)</name>
        <dbReference type="ChEBI" id="CHEBI:29105"/>
    </ligand>
</feature>
<feature type="binding site" evidence="1">
    <location>
        <position position="832"/>
    </location>
    <ligand>
        <name>Zn(2+)</name>
        <dbReference type="ChEBI" id="CHEBI:29105"/>
    </ligand>
</feature>
<feature type="binding site" evidence="1">
    <location>
        <position position="833"/>
    </location>
    <ligand>
        <name>Zn(2+)</name>
        <dbReference type="ChEBI" id="CHEBI:29105"/>
    </ligand>
</feature>